<name>CD59_PAPSP</name>
<evidence type="ECO:0000250" key="1">
    <source>
        <dbReference type="UniProtKB" id="P13987"/>
    </source>
</evidence>
<evidence type="ECO:0000255" key="2"/>
<evidence type="ECO:0000303" key="3">
    <source>
    </source>
</evidence>
<gene>
    <name evidence="3" type="primary">CD59</name>
</gene>
<keyword id="KW-1003">Cell membrane</keyword>
<keyword id="KW-1015">Disulfide bond</keyword>
<keyword id="KW-0325">Glycoprotein</keyword>
<keyword id="KW-0336">GPI-anchor</keyword>
<keyword id="KW-0449">Lipoprotein</keyword>
<keyword id="KW-0472">Membrane</keyword>
<keyword id="KW-0964">Secreted</keyword>
<keyword id="KW-0732">Signal</keyword>
<reference key="1">
    <citation type="journal article" date="1995" name="Immunogenetics">
        <title>Primate terminal complement inhibitor homologues of human CD59.</title>
        <authorList>
            <person name="Fodor W.L."/>
            <person name="Rollins S.A."/>
            <person name="Bianco-Caron S."/>
            <person name="Burton W.V."/>
            <person name="Guilmette E.R."/>
            <person name="Rother R.P."/>
            <person name="Zavoico G.B."/>
            <person name="Squinto S.P."/>
        </authorList>
    </citation>
    <scope>NUCLEOTIDE SEQUENCE [GENOMIC DNA]</scope>
</reference>
<sequence>MGIQGGSVLFGLLLALAVFCHSGHSLQCYNCPNPTTNCKTAINCSSGFDTCLIARAGLQVYNQCWKFANCNFNDISTLLKESELQYFCCKEDLCNEQLENGGTSLSEKTVLLLVTPLLAAAWCLHP</sequence>
<comment type="function">
    <text evidence="1">Potent inhibitor of the complement membrane attack complex (MAC) action, which protects self-cells from damage during complement activation. Acts by binding to the beta-haipins of C8 (C8A and C8B) components of the assembling MAC, forming an intermolecular beta-sheet that prevents incorporation of the multiple copies of C9 required for complete formation of the osmolytic pore.</text>
</comment>
<comment type="subunit">
    <text evidence="1">Interacts with T-cell surface antigen CD2.</text>
</comment>
<comment type="subcellular location">
    <subcellularLocation>
        <location evidence="1">Cell membrane</location>
        <topology evidence="1">Lipid-anchor</topology>
        <topology evidence="1">GPI-anchor</topology>
    </subcellularLocation>
    <subcellularLocation>
        <location evidence="1">Secreted</location>
    </subcellularLocation>
    <text evidence="1">Localizes to the cell surface. Soluble form found in a number of tissues.</text>
</comment>
<comment type="PTM">
    <text evidence="1">N- and O-glycosylated.</text>
</comment>
<proteinExistence type="inferred from homology"/>
<organism>
    <name type="scientific">Papio sp.</name>
    <name type="common">Baboon</name>
    <dbReference type="NCBI Taxonomy" id="61183"/>
    <lineage>
        <taxon>Eukaryota</taxon>
        <taxon>Metazoa</taxon>
        <taxon>Chordata</taxon>
        <taxon>Craniata</taxon>
        <taxon>Vertebrata</taxon>
        <taxon>Euteleostomi</taxon>
        <taxon>Mammalia</taxon>
        <taxon>Eutheria</taxon>
        <taxon>Euarchontoglires</taxon>
        <taxon>Primates</taxon>
        <taxon>Haplorrhini</taxon>
        <taxon>Catarrhini</taxon>
        <taxon>Cercopithecidae</taxon>
        <taxon>Cercopithecinae</taxon>
        <taxon>Papio</taxon>
    </lineage>
</organism>
<dbReference type="EMBL" id="L22862">
    <property type="protein sequence ID" value="AAA74127.1"/>
    <property type="molecule type" value="Genomic_DNA"/>
</dbReference>
<dbReference type="PIR" id="I36914">
    <property type="entry name" value="I36914"/>
</dbReference>
<dbReference type="SMR" id="Q28785"/>
<dbReference type="GlyCosmos" id="Q28785">
    <property type="glycosylation" value="1 site, No reported glycans"/>
</dbReference>
<dbReference type="GO" id="GO:0005886">
    <property type="term" value="C:plasma membrane"/>
    <property type="evidence" value="ECO:0007669"/>
    <property type="project" value="UniProtKB-SubCell"/>
</dbReference>
<dbReference type="GO" id="GO:0098552">
    <property type="term" value="C:side of membrane"/>
    <property type="evidence" value="ECO:0007669"/>
    <property type="project" value="UniProtKB-KW"/>
</dbReference>
<dbReference type="GO" id="GO:0001848">
    <property type="term" value="F:complement binding"/>
    <property type="evidence" value="ECO:0007669"/>
    <property type="project" value="TreeGrafter"/>
</dbReference>
<dbReference type="GO" id="GO:0001971">
    <property type="term" value="P:negative regulation of activation of membrane attack complex"/>
    <property type="evidence" value="ECO:0007669"/>
    <property type="project" value="TreeGrafter"/>
</dbReference>
<dbReference type="CDD" id="cd23554">
    <property type="entry name" value="TFP_LU_ECD_CD59"/>
    <property type="match status" value="1"/>
</dbReference>
<dbReference type="FunFam" id="2.10.60.10:FF:000023">
    <property type="entry name" value="CD59 glycoprotein preproprotein"/>
    <property type="match status" value="1"/>
</dbReference>
<dbReference type="Gene3D" id="2.10.60.10">
    <property type="entry name" value="CD59"/>
    <property type="match status" value="1"/>
</dbReference>
<dbReference type="InterPro" id="IPR056949">
    <property type="entry name" value="CD59"/>
</dbReference>
<dbReference type="InterPro" id="IPR018363">
    <property type="entry name" value="CD59_antigen_CS"/>
</dbReference>
<dbReference type="InterPro" id="IPR016054">
    <property type="entry name" value="LY6_UPA_recep-like"/>
</dbReference>
<dbReference type="InterPro" id="IPR045860">
    <property type="entry name" value="Snake_toxin-like_sf"/>
</dbReference>
<dbReference type="PANTHER" id="PTHR10036">
    <property type="entry name" value="CD59 GLYCOPROTEIN"/>
    <property type="match status" value="1"/>
</dbReference>
<dbReference type="PANTHER" id="PTHR10036:SF24">
    <property type="entry name" value="CD59 GLYCOPROTEIN"/>
    <property type="match status" value="1"/>
</dbReference>
<dbReference type="Pfam" id="PF25152">
    <property type="entry name" value="CD59"/>
    <property type="match status" value="1"/>
</dbReference>
<dbReference type="SMART" id="SM00134">
    <property type="entry name" value="LU"/>
    <property type="match status" value="1"/>
</dbReference>
<dbReference type="SUPFAM" id="SSF57302">
    <property type="entry name" value="Snake toxin-like"/>
    <property type="match status" value="1"/>
</dbReference>
<dbReference type="PROSITE" id="PS00983">
    <property type="entry name" value="LY6_UPAR"/>
    <property type="match status" value="1"/>
</dbReference>
<accession>Q28785</accession>
<feature type="signal peptide" evidence="1">
    <location>
        <begin position="1"/>
        <end position="25"/>
    </location>
</feature>
<feature type="chain" id="PRO_0000036116" description="CD59 glycoprotein">
    <location>
        <begin position="26"/>
        <end position="100"/>
    </location>
</feature>
<feature type="propeptide" id="PRO_0000036117" description="Removed in mature form" evidence="1">
    <location>
        <begin position="101"/>
        <end position="126"/>
    </location>
</feature>
<feature type="domain" description="UPAR/Ly6">
    <location>
        <begin position="26"/>
        <end position="106"/>
    </location>
</feature>
<feature type="lipid moiety-binding region" description="GPI-anchor amidated asparagine" evidence="1">
    <location>
        <position position="100"/>
    </location>
</feature>
<feature type="glycosylation site" description="N-linked (GlcNAc...) asparagine" evidence="2">
    <location>
        <position position="43"/>
    </location>
</feature>
<feature type="disulfide bond" evidence="1">
    <location>
        <begin position="28"/>
        <end position="51"/>
    </location>
</feature>
<feature type="disulfide bond" evidence="1">
    <location>
        <begin position="31"/>
        <end position="38"/>
    </location>
</feature>
<feature type="disulfide bond" evidence="1">
    <location>
        <begin position="44"/>
        <end position="64"/>
    </location>
</feature>
<feature type="disulfide bond" evidence="1">
    <location>
        <begin position="70"/>
        <end position="88"/>
    </location>
</feature>
<feature type="disulfide bond" evidence="1">
    <location>
        <begin position="89"/>
        <end position="94"/>
    </location>
</feature>
<protein>
    <recommendedName>
        <fullName>CD59 glycoprotein</fullName>
    </recommendedName>
    <alternativeName>
        <fullName>MAC-inhibitory protein</fullName>
        <shortName>MAC-IP</shortName>
    </alternativeName>
    <alternativeName>
        <fullName>Membrane attack complex inhibition factor</fullName>
        <shortName>MACIF</shortName>
    </alternativeName>
    <alternativeName>
        <fullName>Protectin</fullName>
    </alternativeName>
    <cdAntigenName>CD59</cdAntigenName>
</protein>